<dbReference type="EMBL" id="AE000520">
    <property type="protein sequence ID" value="AAC65809.1"/>
    <property type="molecule type" value="Genomic_DNA"/>
</dbReference>
<dbReference type="PIR" id="D71275">
    <property type="entry name" value="D71275"/>
</dbReference>
<dbReference type="RefSeq" id="WP_010882283.1">
    <property type="nucleotide sequence ID" value="NC_021490.2"/>
</dbReference>
<dbReference type="STRING" id="243276.TP_0839"/>
<dbReference type="EnsemblBacteria" id="AAC65809">
    <property type="protein sequence ID" value="AAC65809"/>
    <property type="gene ID" value="TP_0839"/>
</dbReference>
<dbReference type="KEGG" id="tpa:TP_0839"/>
<dbReference type="KEGG" id="tpw:TPANIC_0839"/>
<dbReference type="HOGENOM" id="CLU_828859_0_0_12"/>
<dbReference type="Proteomes" id="UP000000811">
    <property type="component" value="Chromosome"/>
</dbReference>
<dbReference type="GO" id="GO:0005886">
    <property type="term" value="C:plasma membrane"/>
    <property type="evidence" value="ECO:0007669"/>
    <property type="project" value="UniProtKB-SubCell"/>
</dbReference>
<dbReference type="InterPro" id="IPR025164">
    <property type="entry name" value="Toastrack_DUF4097"/>
</dbReference>
<dbReference type="Pfam" id="PF13349">
    <property type="entry name" value="DUF4097"/>
    <property type="match status" value="1"/>
</dbReference>
<dbReference type="PROSITE" id="PS51257">
    <property type="entry name" value="PROKAR_LIPOPROTEIN"/>
    <property type="match status" value="1"/>
</dbReference>
<sequence length="335" mass="37365">MDKKARAHTVIVCLVGALSLACAYLLGGSMKYLRGDVSRFWTSSRMQRHPAHSSQPVVRTFTDADGYTCLDQAHPHTIVIDATRVRVSVQVCAQRRSLAYKVVKNSVYDPLSIHLDPTMLVLRRGKKTVRESTPPADSPGVMQSALNVRDTLRDWFYTFWKNVWGSRWGHSVVPIEAIICVPAQHNVHNLKVRVKDSSLRLEGIEVRFADVYAHASELKLNGVRTDRTLLHTTDGDTQCSRCVLSDAHLYTDRGTLSFDGTLQGNSEIGTRTGTVVARFTERQSYYALSVFSGHGAVYINDQRVRKTLGTCLSTGGSAQLCVRNERGVLHVYFPQ</sequence>
<gene>
    <name type="ordered locus">TP_0839</name>
</gene>
<reference key="1">
    <citation type="journal article" date="1998" name="Science">
        <title>Complete genome sequence of Treponema pallidum, the syphilis spirochete.</title>
        <authorList>
            <person name="Fraser C.M."/>
            <person name="Norris S.J."/>
            <person name="Weinstock G.M."/>
            <person name="White O."/>
            <person name="Sutton G.G."/>
            <person name="Dodson R.J."/>
            <person name="Gwinn M.L."/>
            <person name="Hickey E.K."/>
            <person name="Clayton R.A."/>
            <person name="Ketchum K.A."/>
            <person name="Sodergren E."/>
            <person name="Hardham J.M."/>
            <person name="McLeod M.P."/>
            <person name="Salzberg S.L."/>
            <person name="Peterson J.D."/>
            <person name="Khalak H.G."/>
            <person name="Richardson D.L."/>
            <person name="Howell J.K."/>
            <person name="Chidambaram M."/>
            <person name="Utterback T.R."/>
            <person name="McDonald L.A."/>
            <person name="Artiach P."/>
            <person name="Bowman C."/>
            <person name="Cotton M.D."/>
            <person name="Fujii C."/>
            <person name="Garland S.A."/>
            <person name="Hatch B."/>
            <person name="Horst K."/>
            <person name="Roberts K.M."/>
            <person name="Sandusky M."/>
            <person name="Weidman J.F."/>
            <person name="Smith H.O."/>
            <person name="Venter J.C."/>
        </authorList>
    </citation>
    <scope>NUCLEOTIDE SEQUENCE [LARGE SCALE GENOMIC DNA]</scope>
    <source>
        <strain>Nichols</strain>
    </source>
</reference>
<proteinExistence type="inferred from homology"/>
<protein>
    <recommendedName>
        <fullName>Uncharacterized lipoprotein TP_0839</fullName>
    </recommendedName>
</protein>
<feature type="signal peptide" evidence="1">
    <location>
        <begin position="1"/>
        <end position="21"/>
    </location>
</feature>
<feature type="chain" id="PRO_0000014264" description="Uncharacterized lipoprotein TP_0839">
    <location>
        <begin position="22"/>
        <end position="335"/>
    </location>
</feature>
<feature type="lipid moiety-binding region" description="N-palmitoyl cysteine" evidence="1">
    <location>
        <position position="22"/>
    </location>
</feature>
<feature type="lipid moiety-binding region" description="S-diacylglycerol cysteine" evidence="1">
    <location>
        <position position="22"/>
    </location>
</feature>
<evidence type="ECO:0000255" key="1">
    <source>
        <dbReference type="PROSITE-ProRule" id="PRU00303"/>
    </source>
</evidence>
<keyword id="KW-1003">Cell membrane</keyword>
<keyword id="KW-0449">Lipoprotein</keyword>
<keyword id="KW-0472">Membrane</keyword>
<keyword id="KW-0564">Palmitate</keyword>
<keyword id="KW-1185">Reference proteome</keyword>
<keyword id="KW-0732">Signal</keyword>
<organism>
    <name type="scientific">Treponema pallidum (strain Nichols)</name>
    <dbReference type="NCBI Taxonomy" id="243276"/>
    <lineage>
        <taxon>Bacteria</taxon>
        <taxon>Pseudomonadati</taxon>
        <taxon>Spirochaetota</taxon>
        <taxon>Spirochaetia</taxon>
        <taxon>Spirochaetales</taxon>
        <taxon>Treponemataceae</taxon>
        <taxon>Treponema</taxon>
    </lineage>
</organism>
<accession>O83811</accession>
<comment type="subcellular location">
    <subcellularLocation>
        <location evidence="1">Cell membrane</location>
        <topology evidence="1">Lipid-anchor</topology>
    </subcellularLocation>
</comment>
<name>Y839_TREPA</name>